<gene>
    <name evidence="1" type="primary">ispH</name>
    <name type="ordered locus">BWG_0027</name>
</gene>
<evidence type="ECO:0000255" key="1">
    <source>
        <dbReference type="HAMAP-Rule" id="MF_00191"/>
    </source>
</evidence>
<accession>C4ZPV5</accession>
<protein>
    <recommendedName>
        <fullName evidence="1">4-hydroxy-3-methylbut-2-enyl diphosphate reductase</fullName>
        <shortName evidence="1">HMBPP reductase</shortName>
        <ecNumber evidence="1">1.17.7.4</ecNumber>
    </recommendedName>
</protein>
<proteinExistence type="inferred from homology"/>
<dbReference type="EC" id="1.17.7.4" evidence="1"/>
<dbReference type="EMBL" id="CP001396">
    <property type="protein sequence ID" value="ACR61738.1"/>
    <property type="molecule type" value="Genomic_DNA"/>
</dbReference>
<dbReference type="RefSeq" id="WP_001166395.1">
    <property type="nucleotide sequence ID" value="NC_012759.1"/>
</dbReference>
<dbReference type="SMR" id="C4ZPV5"/>
<dbReference type="GeneID" id="93777407"/>
<dbReference type="KEGG" id="ebw:BWG_0027"/>
<dbReference type="HOGENOM" id="CLU_027486_1_0_6"/>
<dbReference type="UniPathway" id="UPA00056">
    <property type="reaction ID" value="UER00097"/>
</dbReference>
<dbReference type="UniPathway" id="UPA00059">
    <property type="reaction ID" value="UER00105"/>
</dbReference>
<dbReference type="GO" id="GO:0051539">
    <property type="term" value="F:4 iron, 4 sulfur cluster binding"/>
    <property type="evidence" value="ECO:0007669"/>
    <property type="project" value="UniProtKB-UniRule"/>
</dbReference>
<dbReference type="GO" id="GO:0051745">
    <property type="term" value="F:4-hydroxy-3-methylbut-2-enyl diphosphate reductase activity"/>
    <property type="evidence" value="ECO:0007669"/>
    <property type="project" value="UniProtKB-UniRule"/>
</dbReference>
<dbReference type="GO" id="GO:0046872">
    <property type="term" value="F:metal ion binding"/>
    <property type="evidence" value="ECO:0007669"/>
    <property type="project" value="UniProtKB-KW"/>
</dbReference>
<dbReference type="GO" id="GO:0050992">
    <property type="term" value="P:dimethylallyl diphosphate biosynthetic process"/>
    <property type="evidence" value="ECO:0007669"/>
    <property type="project" value="UniProtKB-UniRule"/>
</dbReference>
<dbReference type="GO" id="GO:0019288">
    <property type="term" value="P:isopentenyl diphosphate biosynthetic process, methylerythritol 4-phosphate pathway"/>
    <property type="evidence" value="ECO:0007669"/>
    <property type="project" value="UniProtKB-UniRule"/>
</dbReference>
<dbReference type="GO" id="GO:0016114">
    <property type="term" value="P:terpenoid biosynthetic process"/>
    <property type="evidence" value="ECO:0007669"/>
    <property type="project" value="UniProtKB-UniRule"/>
</dbReference>
<dbReference type="CDD" id="cd13944">
    <property type="entry name" value="lytB_ispH"/>
    <property type="match status" value="1"/>
</dbReference>
<dbReference type="FunFam" id="3.40.1010.20:FF:000001">
    <property type="entry name" value="4-hydroxy-3-methylbut-2-enyl diphosphate reductase"/>
    <property type="match status" value="1"/>
</dbReference>
<dbReference type="FunFam" id="3.40.50.11270:FF:000001">
    <property type="entry name" value="4-hydroxy-3-methylbut-2-enyl diphosphate reductase"/>
    <property type="match status" value="1"/>
</dbReference>
<dbReference type="Gene3D" id="3.40.50.11270">
    <property type="match status" value="1"/>
</dbReference>
<dbReference type="Gene3D" id="3.40.1010.20">
    <property type="entry name" value="4-hydroxy-3-methylbut-2-enyl diphosphate reductase, catalytic domain"/>
    <property type="match status" value="2"/>
</dbReference>
<dbReference type="HAMAP" id="MF_00191">
    <property type="entry name" value="IspH"/>
    <property type="match status" value="1"/>
</dbReference>
<dbReference type="InterPro" id="IPR003451">
    <property type="entry name" value="LytB/IspH"/>
</dbReference>
<dbReference type="NCBIfam" id="TIGR00216">
    <property type="entry name" value="ispH_lytB"/>
    <property type="match status" value="1"/>
</dbReference>
<dbReference type="NCBIfam" id="NF002188">
    <property type="entry name" value="PRK01045.1-2"/>
    <property type="match status" value="1"/>
</dbReference>
<dbReference type="NCBIfam" id="NF002190">
    <property type="entry name" value="PRK01045.1-4"/>
    <property type="match status" value="1"/>
</dbReference>
<dbReference type="PANTHER" id="PTHR30426">
    <property type="entry name" value="4-HYDROXY-3-METHYLBUT-2-ENYL DIPHOSPHATE REDUCTASE"/>
    <property type="match status" value="1"/>
</dbReference>
<dbReference type="PANTHER" id="PTHR30426:SF0">
    <property type="entry name" value="4-HYDROXY-3-METHYLBUT-2-ENYL DIPHOSPHATE REDUCTASE"/>
    <property type="match status" value="1"/>
</dbReference>
<dbReference type="Pfam" id="PF02401">
    <property type="entry name" value="LYTB"/>
    <property type="match status" value="1"/>
</dbReference>
<comment type="function">
    <text evidence="1">Catalyzes the conversion of 1-hydroxy-2-methyl-2-(E)-butenyl 4-diphosphate (HMBPP) into a mixture of isopentenyl diphosphate (IPP) and dimethylallyl diphosphate (DMAPP). Acts in the terminal step of the DOXP/MEP pathway for isoprenoid precursor biosynthesis.</text>
</comment>
<comment type="catalytic activity">
    <reaction evidence="1">
        <text>isopentenyl diphosphate + 2 oxidized [2Fe-2S]-[ferredoxin] + H2O = (2E)-4-hydroxy-3-methylbut-2-enyl diphosphate + 2 reduced [2Fe-2S]-[ferredoxin] + 2 H(+)</text>
        <dbReference type="Rhea" id="RHEA:24488"/>
        <dbReference type="Rhea" id="RHEA-COMP:10000"/>
        <dbReference type="Rhea" id="RHEA-COMP:10001"/>
        <dbReference type="ChEBI" id="CHEBI:15377"/>
        <dbReference type="ChEBI" id="CHEBI:15378"/>
        <dbReference type="ChEBI" id="CHEBI:33737"/>
        <dbReference type="ChEBI" id="CHEBI:33738"/>
        <dbReference type="ChEBI" id="CHEBI:128753"/>
        <dbReference type="ChEBI" id="CHEBI:128769"/>
        <dbReference type="EC" id="1.17.7.4"/>
    </reaction>
</comment>
<comment type="catalytic activity">
    <reaction evidence="1">
        <text>dimethylallyl diphosphate + 2 oxidized [2Fe-2S]-[ferredoxin] + H2O = (2E)-4-hydroxy-3-methylbut-2-enyl diphosphate + 2 reduced [2Fe-2S]-[ferredoxin] + 2 H(+)</text>
        <dbReference type="Rhea" id="RHEA:24825"/>
        <dbReference type="Rhea" id="RHEA-COMP:10000"/>
        <dbReference type="Rhea" id="RHEA-COMP:10001"/>
        <dbReference type="ChEBI" id="CHEBI:15377"/>
        <dbReference type="ChEBI" id="CHEBI:15378"/>
        <dbReference type="ChEBI" id="CHEBI:33737"/>
        <dbReference type="ChEBI" id="CHEBI:33738"/>
        <dbReference type="ChEBI" id="CHEBI:57623"/>
        <dbReference type="ChEBI" id="CHEBI:128753"/>
        <dbReference type="EC" id="1.17.7.4"/>
    </reaction>
</comment>
<comment type="cofactor">
    <cofactor evidence="1">
        <name>[4Fe-4S] cluster</name>
        <dbReference type="ChEBI" id="CHEBI:49883"/>
    </cofactor>
    <text evidence="1">Binds 1 [4Fe-4S] cluster per subunit.</text>
</comment>
<comment type="pathway">
    <text evidence="1">Isoprenoid biosynthesis; dimethylallyl diphosphate biosynthesis; dimethylallyl diphosphate from (2E)-4-hydroxy-3-methylbutenyl diphosphate: step 1/1.</text>
</comment>
<comment type="pathway">
    <text evidence="1">Isoprenoid biosynthesis; isopentenyl diphosphate biosynthesis via DXP pathway; isopentenyl diphosphate from 1-deoxy-D-xylulose 5-phosphate: step 6/6.</text>
</comment>
<comment type="subunit">
    <text evidence="1">Homodimer.</text>
</comment>
<comment type="similarity">
    <text evidence="1">Belongs to the IspH family.</text>
</comment>
<reference key="1">
    <citation type="journal article" date="2009" name="J. Bacteriol.">
        <title>Genomic sequencing reveals regulatory mutations and recombinational events in the widely used MC4100 lineage of Escherichia coli K-12.</title>
        <authorList>
            <person name="Ferenci T."/>
            <person name="Zhou Z."/>
            <person name="Betteridge T."/>
            <person name="Ren Y."/>
            <person name="Liu Y."/>
            <person name="Feng L."/>
            <person name="Reeves P.R."/>
            <person name="Wang L."/>
        </authorList>
    </citation>
    <scope>NUCLEOTIDE SEQUENCE [LARGE SCALE GENOMIC DNA]</scope>
    <source>
        <strain>K12 / MC4100 / BW2952</strain>
    </source>
</reference>
<name>ISPH_ECOBW</name>
<keyword id="KW-0004">4Fe-4S</keyword>
<keyword id="KW-0408">Iron</keyword>
<keyword id="KW-0411">Iron-sulfur</keyword>
<keyword id="KW-0414">Isoprene biosynthesis</keyword>
<keyword id="KW-0479">Metal-binding</keyword>
<keyword id="KW-0560">Oxidoreductase</keyword>
<feature type="chain" id="PRO_1000204001" description="4-hydroxy-3-methylbut-2-enyl diphosphate reductase">
    <location>
        <begin position="1"/>
        <end position="316"/>
    </location>
</feature>
<feature type="active site" description="Proton donor" evidence="1">
    <location>
        <position position="126"/>
    </location>
</feature>
<feature type="binding site" evidence="1">
    <location>
        <position position="12"/>
    </location>
    <ligand>
        <name>[4Fe-4S] cluster</name>
        <dbReference type="ChEBI" id="CHEBI:49883"/>
    </ligand>
</feature>
<feature type="binding site" evidence="1">
    <location>
        <position position="41"/>
    </location>
    <ligand>
        <name>(2E)-4-hydroxy-3-methylbut-2-enyl diphosphate</name>
        <dbReference type="ChEBI" id="CHEBI:128753"/>
    </ligand>
</feature>
<feature type="binding site" evidence="1">
    <location>
        <position position="41"/>
    </location>
    <ligand>
        <name>dimethylallyl diphosphate</name>
        <dbReference type="ChEBI" id="CHEBI:57623"/>
    </ligand>
</feature>
<feature type="binding site" evidence="1">
    <location>
        <position position="41"/>
    </location>
    <ligand>
        <name>isopentenyl diphosphate</name>
        <dbReference type="ChEBI" id="CHEBI:128769"/>
    </ligand>
</feature>
<feature type="binding site" evidence="1">
    <location>
        <position position="74"/>
    </location>
    <ligand>
        <name>(2E)-4-hydroxy-3-methylbut-2-enyl diphosphate</name>
        <dbReference type="ChEBI" id="CHEBI:128753"/>
    </ligand>
</feature>
<feature type="binding site" evidence="1">
    <location>
        <position position="74"/>
    </location>
    <ligand>
        <name>dimethylallyl diphosphate</name>
        <dbReference type="ChEBI" id="CHEBI:57623"/>
    </ligand>
</feature>
<feature type="binding site" evidence="1">
    <location>
        <position position="74"/>
    </location>
    <ligand>
        <name>isopentenyl diphosphate</name>
        <dbReference type="ChEBI" id="CHEBI:128769"/>
    </ligand>
</feature>
<feature type="binding site" evidence="1">
    <location>
        <position position="96"/>
    </location>
    <ligand>
        <name>[4Fe-4S] cluster</name>
        <dbReference type="ChEBI" id="CHEBI:49883"/>
    </ligand>
</feature>
<feature type="binding site" evidence="1">
    <location>
        <position position="124"/>
    </location>
    <ligand>
        <name>(2E)-4-hydroxy-3-methylbut-2-enyl diphosphate</name>
        <dbReference type="ChEBI" id="CHEBI:128753"/>
    </ligand>
</feature>
<feature type="binding site" evidence="1">
    <location>
        <position position="124"/>
    </location>
    <ligand>
        <name>dimethylallyl diphosphate</name>
        <dbReference type="ChEBI" id="CHEBI:57623"/>
    </ligand>
</feature>
<feature type="binding site" evidence="1">
    <location>
        <position position="124"/>
    </location>
    <ligand>
        <name>isopentenyl diphosphate</name>
        <dbReference type="ChEBI" id="CHEBI:128769"/>
    </ligand>
</feature>
<feature type="binding site" evidence="1">
    <location>
        <position position="167"/>
    </location>
    <ligand>
        <name>(2E)-4-hydroxy-3-methylbut-2-enyl diphosphate</name>
        <dbReference type="ChEBI" id="CHEBI:128753"/>
    </ligand>
</feature>
<feature type="binding site" evidence="1">
    <location>
        <position position="197"/>
    </location>
    <ligand>
        <name>[4Fe-4S] cluster</name>
        <dbReference type="ChEBI" id="CHEBI:49883"/>
    </ligand>
</feature>
<feature type="binding site" evidence="1">
    <location>
        <position position="225"/>
    </location>
    <ligand>
        <name>(2E)-4-hydroxy-3-methylbut-2-enyl diphosphate</name>
        <dbReference type="ChEBI" id="CHEBI:128753"/>
    </ligand>
</feature>
<feature type="binding site" evidence="1">
    <location>
        <position position="225"/>
    </location>
    <ligand>
        <name>dimethylallyl diphosphate</name>
        <dbReference type="ChEBI" id="CHEBI:57623"/>
    </ligand>
</feature>
<feature type="binding site" evidence="1">
    <location>
        <position position="225"/>
    </location>
    <ligand>
        <name>isopentenyl diphosphate</name>
        <dbReference type="ChEBI" id="CHEBI:128769"/>
    </ligand>
</feature>
<feature type="binding site" evidence="1">
    <location>
        <position position="226"/>
    </location>
    <ligand>
        <name>(2E)-4-hydroxy-3-methylbut-2-enyl diphosphate</name>
        <dbReference type="ChEBI" id="CHEBI:128753"/>
    </ligand>
</feature>
<feature type="binding site" evidence="1">
    <location>
        <position position="226"/>
    </location>
    <ligand>
        <name>dimethylallyl diphosphate</name>
        <dbReference type="ChEBI" id="CHEBI:57623"/>
    </ligand>
</feature>
<feature type="binding site" evidence="1">
    <location>
        <position position="226"/>
    </location>
    <ligand>
        <name>isopentenyl diphosphate</name>
        <dbReference type="ChEBI" id="CHEBI:128769"/>
    </ligand>
</feature>
<feature type="binding site" evidence="1">
    <location>
        <position position="227"/>
    </location>
    <ligand>
        <name>(2E)-4-hydroxy-3-methylbut-2-enyl diphosphate</name>
        <dbReference type="ChEBI" id="CHEBI:128753"/>
    </ligand>
</feature>
<feature type="binding site" evidence="1">
    <location>
        <position position="227"/>
    </location>
    <ligand>
        <name>dimethylallyl diphosphate</name>
        <dbReference type="ChEBI" id="CHEBI:57623"/>
    </ligand>
</feature>
<feature type="binding site" evidence="1">
    <location>
        <position position="227"/>
    </location>
    <ligand>
        <name>isopentenyl diphosphate</name>
        <dbReference type="ChEBI" id="CHEBI:128769"/>
    </ligand>
</feature>
<feature type="binding site" evidence="1">
    <location>
        <position position="269"/>
    </location>
    <ligand>
        <name>(2E)-4-hydroxy-3-methylbut-2-enyl diphosphate</name>
        <dbReference type="ChEBI" id="CHEBI:128753"/>
    </ligand>
</feature>
<feature type="binding site" evidence="1">
    <location>
        <position position="269"/>
    </location>
    <ligand>
        <name>dimethylallyl diphosphate</name>
        <dbReference type="ChEBI" id="CHEBI:57623"/>
    </ligand>
</feature>
<feature type="binding site" evidence="1">
    <location>
        <position position="269"/>
    </location>
    <ligand>
        <name>isopentenyl diphosphate</name>
        <dbReference type="ChEBI" id="CHEBI:128769"/>
    </ligand>
</feature>
<organism>
    <name type="scientific">Escherichia coli (strain K12 / MC4100 / BW2952)</name>
    <dbReference type="NCBI Taxonomy" id="595496"/>
    <lineage>
        <taxon>Bacteria</taxon>
        <taxon>Pseudomonadati</taxon>
        <taxon>Pseudomonadota</taxon>
        <taxon>Gammaproteobacteria</taxon>
        <taxon>Enterobacterales</taxon>
        <taxon>Enterobacteriaceae</taxon>
        <taxon>Escherichia</taxon>
    </lineage>
</organism>
<sequence length="316" mass="34775">MQILLANPRGFCAGVDRAISIVENALAIYGAPIYVRHEVVHNRYVVDSLRERGAIFIEQISEVPDGAILIFSAHGVSQAVRNEAKSRDLTVFDATCPLVTKVHMEVARASRRGEESILIGHAGHPEVEGTMGQYSNPEGGMYLVESPDDVWKLTVKNEEKLSFMTQTTLSVDDTSDVIDALRKRFPKIVGPRKDDICYATTNRQEAVRALAEQAEVVLVVGSKNSSNSNRLAELAQRMGKRAFLIDDAKDIQEEWVKEVKCVGVTAGASAPDILVQNVVARLQQLGGGEAIPLEGREENIVFEVPKELRVDIREVD</sequence>